<reference key="1">
    <citation type="journal article" date="2009" name="PLoS Genet.">
        <title>Organised genome dynamics in the Escherichia coli species results in highly diverse adaptive paths.</title>
        <authorList>
            <person name="Touchon M."/>
            <person name="Hoede C."/>
            <person name="Tenaillon O."/>
            <person name="Barbe V."/>
            <person name="Baeriswyl S."/>
            <person name="Bidet P."/>
            <person name="Bingen E."/>
            <person name="Bonacorsi S."/>
            <person name="Bouchier C."/>
            <person name="Bouvet O."/>
            <person name="Calteau A."/>
            <person name="Chiapello H."/>
            <person name="Clermont O."/>
            <person name="Cruveiller S."/>
            <person name="Danchin A."/>
            <person name="Diard M."/>
            <person name="Dossat C."/>
            <person name="Karoui M.E."/>
            <person name="Frapy E."/>
            <person name="Garry L."/>
            <person name="Ghigo J.M."/>
            <person name="Gilles A.M."/>
            <person name="Johnson J."/>
            <person name="Le Bouguenec C."/>
            <person name="Lescat M."/>
            <person name="Mangenot S."/>
            <person name="Martinez-Jehanne V."/>
            <person name="Matic I."/>
            <person name="Nassif X."/>
            <person name="Oztas S."/>
            <person name="Petit M.A."/>
            <person name="Pichon C."/>
            <person name="Rouy Z."/>
            <person name="Ruf C.S."/>
            <person name="Schneider D."/>
            <person name="Tourret J."/>
            <person name="Vacherie B."/>
            <person name="Vallenet D."/>
            <person name="Medigue C."/>
            <person name="Rocha E.P.C."/>
            <person name="Denamur E."/>
        </authorList>
    </citation>
    <scope>NUCLEOTIDE SEQUENCE [LARGE SCALE GENOMIC DNA]</scope>
    <source>
        <strain>UMN026 / ExPEC</strain>
    </source>
</reference>
<feature type="chain" id="PRO_1000200293" description="Xylose isomerase">
    <location>
        <begin position="1"/>
        <end position="440"/>
    </location>
</feature>
<feature type="active site" evidence="1">
    <location>
        <position position="101"/>
    </location>
</feature>
<feature type="active site" evidence="1">
    <location>
        <position position="104"/>
    </location>
</feature>
<feature type="binding site" evidence="1">
    <location>
        <position position="232"/>
    </location>
    <ligand>
        <name>Mg(2+)</name>
        <dbReference type="ChEBI" id="CHEBI:18420"/>
        <label>1</label>
    </ligand>
</feature>
<feature type="binding site" evidence="1">
    <location>
        <position position="268"/>
    </location>
    <ligand>
        <name>Mg(2+)</name>
        <dbReference type="ChEBI" id="CHEBI:18420"/>
        <label>1</label>
    </ligand>
</feature>
<feature type="binding site" evidence="1">
    <location>
        <position position="268"/>
    </location>
    <ligand>
        <name>Mg(2+)</name>
        <dbReference type="ChEBI" id="CHEBI:18420"/>
        <label>2</label>
    </ligand>
</feature>
<feature type="binding site" evidence="1">
    <location>
        <position position="271"/>
    </location>
    <ligand>
        <name>Mg(2+)</name>
        <dbReference type="ChEBI" id="CHEBI:18420"/>
        <label>2</label>
    </ligand>
</feature>
<feature type="binding site" evidence="1">
    <location>
        <position position="296"/>
    </location>
    <ligand>
        <name>Mg(2+)</name>
        <dbReference type="ChEBI" id="CHEBI:18420"/>
        <label>1</label>
    </ligand>
</feature>
<feature type="binding site" evidence="1">
    <location>
        <position position="307"/>
    </location>
    <ligand>
        <name>Mg(2+)</name>
        <dbReference type="ChEBI" id="CHEBI:18420"/>
        <label>2</label>
    </ligand>
</feature>
<feature type="binding site" evidence="1">
    <location>
        <position position="309"/>
    </location>
    <ligand>
        <name>Mg(2+)</name>
        <dbReference type="ChEBI" id="CHEBI:18420"/>
        <label>2</label>
    </ligand>
</feature>
<feature type="binding site" evidence="1">
    <location>
        <position position="339"/>
    </location>
    <ligand>
        <name>Mg(2+)</name>
        <dbReference type="ChEBI" id="CHEBI:18420"/>
        <label>1</label>
    </ligand>
</feature>
<sequence length="440" mass="49700">MQAYFDQLDRVRYEGSKSSNPLAFHHYNPDELVLGKRMEEHLRFAACYWHTFCWNGADMFGVGAFNRPWQQPGEALALAKRKADVAFEFFHKLHVPFYCFHDVDVSPEGASLKEYINNFAQMVDVLAGKQEESGVKLLWGTANCFTNPRYGAGAATNPDPEVFSWAATQVVTAMEATHKLGGENYVLWGGREGYETLLNTDLRQEREQLGRFMQMVVEHKHKIGFQGTLLIEPKPQEPTKHQYDYDAATVYGFLKQFGLEKEIKLNIEANHATLAGHSFHHEIATAIALGLFGSVDANRGDAQLGWDTDQFPNSVEENALVMYEILKAGGFTTGGLNFDAKVRRQSTDKYDLFYGHIGAMDTMALALKIAARMIEDGELDKRIAQRYSGWNSELGQQILKGQMSLADLAKYAQEHNLSPVHQSGRQEQLENLVNHYLFDK</sequence>
<accession>B7NEL7</accession>
<organism>
    <name type="scientific">Escherichia coli O17:K52:H18 (strain UMN026 / ExPEC)</name>
    <dbReference type="NCBI Taxonomy" id="585056"/>
    <lineage>
        <taxon>Bacteria</taxon>
        <taxon>Pseudomonadati</taxon>
        <taxon>Pseudomonadota</taxon>
        <taxon>Gammaproteobacteria</taxon>
        <taxon>Enterobacterales</taxon>
        <taxon>Enterobacteriaceae</taxon>
        <taxon>Escherichia</taxon>
    </lineage>
</organism>
<evidence type="ECO:0000255" key="1">
    <source>
        <dbReference type="HAMAP-Rule" id="MF_00455"/>
    </source>
</evidence>
<dbReference type="EC" id="5.3.1.5" evidence="1"/>
<dbReference type="EMBL" id="CU928163">
    <property type="protein sequence ID" value="CAR15218.1"/>
    <property type="molecule type" value="Genomic_DNA"/>
</dbReference>
<dbReference type="RefSeq" id="WP_001149573.1">
    <property type="nucleotide sequence ID" value="NC_011751.1"/>
</dbReference>
<dbReference type="RefSeq" id="YP_002414718.1">
    <property type="nucleotide sequence ID" value="NC_011751.1"/>
</dbReference>
<dbReference type="SMR" id="B7NEL7"/>
<dbReference type="STRING" id="585056.ECUMN_4076"/>
<dbReference type="KEGG" id="eum:ECUMN_4076"/>
<dbReference type="PATRIC" id="fig|585056.7.peg.4251"/>
<dbReference type="HOGENOM" id="CLU_037261_1_0_6"/>
<dbReference type="Proteomes" id="UP000007097">
    <property type="component" value="Chromosome"/>
</dbReference>
<dbReference type="GO" id="GO:0005737">
    <property type="term" value="C:cytoplasm"/>
    <property type="evidence" value="ECO:0007669"/>
    <property type="project" value="UniProtKB-SubCell"/>
</dbReference>
<dbReference type="GO" id="GO:0000287">
    <property type="term" value="F:magnesium ion binding"/>
    <property type="evidence" value="ECO:0007669"/>
    <property type="project" value="UniProtKB-UniRule"/>
</dbReference>
<dbReference type="GO" id="GO:0009045">
    <property type="term" value="F:xylose isomerase activity"/>
    <property type="evidence" value="ECO:0007669"/>
    <property type="project" value="UniProtKB-UniRule"/>
</dbReference>
<dbReference type="GO" id="GO:0042732">
    <property type="term" value="P:D-xylose metabolic process"/>
    <property type="evidence" value="ECO:0007669"/>
    <property type="project" value="UniProtKB-UniRule"/>
</dbReference>
<dbReference type="FunFam" id="3.20.20.150:FF:000002">
    <property type="entry name" value="Xylose isomerase"/>
    <property type="match status" value="1"/>
</dbReference>
<dbReference type="Gene3D" id="3.20.20.150">
    <property type="entry name" value="Divalent-metal-dependent TIM barrel enzymes"/>
    <property type="match status" value="1"/>
</dbReference>
<dbReference type="HAMAP" id="MF_00455">
    <property type="entry name" value="Xylose_isom_A"/>
    <property type="match status" value="1"/>
</dbReference>
<dbReference type="InterPro" id="IPR036237">
    <property type="entry name" value="Xyl_isomerase-like_sf"/>
</dbReference>
<dbReference type="InterPro" id="IPR013452">
    <property type="entry name" value="Xylose_isom_bac"/>
</dbReference>
<dbReference type="InterPro" id="IPR001998">
    <property type="entry name" value="Xylose_isomerase"/>
</dbReference>
<dbReference type="NCBIfam" id="NF003998">
    <property type="entry name" value="PRK05474.1"/>
    <property type="match status" value="1"/>
</dbReference>
<dbReference type="NCBIfam" id="TIGR02630">
    <property type="entry name" value="xylose_isom_A"/>
    <property type="match status" value="1"/>
</dbReference>
<dbReference type="PANTHER" id="PTHR48408">
    <property type="match status" value="1"/>
</dbReference>
<dbReference type="PANTHER" id="PTHR48408:SF1">
    <property type="entry name" value="XYLOSE ISOMERASE"/>
    <property type="match status" value="1"/>
</dbReference>
<dbReference type="PRINTS" id="PR00688">
    <property type="entry name" value="XYLOSISMRASE"/>
</dbReference>
<dbReference type="SUPFAM" id="SSF51658">
    <property type="entry name" value="Xylose isomerase-like"/>
    <property type="match status" value="1"/>
</dbReference>
<dbReference type="PROSITE" id="PS51415">
    <property type="entry name" value="XYLOSE_ISOMERASE"/>
    <property type="match status" value="1"/>
</dbReference>
<protein>
    <recommendedName>
        <fullName evidence="1">Xylose isomerase</fullName>
        <ecNumber evidence="1">5.3.1.5</ecNumber>
    </recommendedName>
</protein>
<keyword id="KW-0119">Carbohydrate metabolism</keyword>
<keyword id="KW-0963">Cytoplasm</keyword>
<keyword id="KW-0413">Isomerase</keyword>
<keyword id="KW-0460">Magnesium</keyword>
<keyword id="KW-0479">Metal-binding</keyword>
<keyword id="KW-0859">Xylose metabolism</keyword>
<proteinExistence type="inferred from homology"/>
<name>XYLA_ECOLU</name>
<gene>
    <name evidence="1" type="primary">xylA</name>
    <name type="ordered locus">ECUMN_4076</name>
</gene>
<comment type="catalytic activity">
    <reaction evidence="1">
        <text>alpha-D-xylose = alpha-D-xylulofuranose</text>
        <dbReference type="Rhea" id="RHEA:22816"/>
        <dbReference type="ChEBI" id="CHEBI:28518"/>
        <dbReference type="ChEBI" id="CHEBI:188998"/>
        <dbReference type="EC" id="5.3.1.5"/>
    </reaction>
</comment>
<comment type="cofactor">
    <cofactor evidence="1">
        <name>Mg(2+)</name>
        <dbReference type="ChEBI" id="CHEBI:18420"/>
    </cofactor>
    <text evidence="1">Binds 2 magnesium ions per subunit.</text>
</comment>
<comment type="subunit">
    <text evidence="1">Homotetramer.</text>
</comment>
<comment type="subcellular location">
    <subcellularLocation>
        <location evidence="1">Cytoplasm</location>
    </subcellularLocation>
</comment>
<comment type="similarity">
    <text evidence="1">Belongs to the xylose isomerase family.</text>
</comment>